<accession>P0A2N5</accession>
<accession>Q9ZJ11</accession>
<reference key="1">
    <citation type="journal article" date="2001" name="Nature">
        <title>Complete genome sequence of a multiple drug resistant Salmonella enterica serovar Typhi CT18.</title>
        <authorList>
            <person name="Parkhill J."/>
            <person name="Dougan G."/>
            <person name="James K.D."/>
            <person name="Thomson N.R."/>
            <person name="Pickard D."/>
            <person name="Wain J."/>
            <person name="Churcher C.M."/>
            <person name="Mungall K.L."/>
            <person name="Bentley S.D."/>
            <person name="Holden M.T.G."/>
            <person name="Sebaihia M."/>
            <person name="Baker S."/>
            <person name="Basham D."/>
            <person name="Brooks K."/>
            <person name="Chillingworth T."/>
            <person name="Connerton P."/>
            <person name="Cronin A."/>
            <person name="Davis P."/>
            <person name="Davies R.M."/>
            <person name="Dowd L."/>
            <person name="White N."/>
            <person name="Farrar J."/>
            <person name="Feltwell T."/>
            <person name="Hamlin N."/>
            <person name="Haque A."/>
            <person name="Hien T.T."/>
            <person name="Holroyd S."/>
            <person name="Jagels K."/>
            <person name="Krogh A."/>
            <person name="Larsen T.S."/>
            <person name="Leather S."/>
            <person name="Moule S."/>
            <person name="O'Gaora P."/>
            <person name="Parry C."/>
            <person name="Quail M.A."/>
            <person name="Rutherford K.M."/>
            <person name="Simmonds M."/>
            <person name="Skelton J."/>
            <person name="Stevens K."/>
            <person name="Whitehead S."/>
            <person name="Barrell B.G."/>
        </authorList>
    </citation>
    <scope>NUCLEOTIDE SEQUENCE [LARGE SCALE GENOMIC DNA]</scope>
    <source>
        <strain>CT18</strain>
    </source>
</reference>
<reference key="2">
    <citation type="journal article" date="2003" name="J. Bacteriol.">
        <title>Comparative genomics of Salmonella enterica serovar Typhi strains Ty2 and CT18.</title>
        <authorList>
            <person name="Deng W."/>
            <person name="Liou S.-R."/>
            <person name="Plunkett G. III"/>
            <person name="Mayhew G.F."/>
            <person name="Rose D.J."/>
            <person name="Burland V."/>
            <person name="Kodoyianni V."/>
            <person name="Schwartz D.C."/>
            <person name="Blattner F.R."/>
        </authorList>
    </citation>
    <scope>NUCLEOTIDE SEQUENCE [LARGE SCALE GENOMIC DNA]</scope>
    <source>
        <strain>ATCC 700931 / Ty2</strain>
    </source>
</reference>
<protein>
    <recommendedName>
        <fullName>Inner membrane transporter YjeM</fullName>
    </recommendedName>
</protein>
<keyword id="KW-0997">Cell inner membrane</keyword>
<keyword id="KW-1003">Cell membrane</keyword>
<keyword id="KW-0472">Membrane</keyword>
<keyword id="KW-0812">Transmembrane</keyword>
<keyword id="KW-1133">Transmembrane helix</keyword>
<keyword id="KW-0813">Transport</keyword>
<comment type="subcellular location">
    <subcellularLocation>
        <location evidence="1">Cell inner membrane</location>
        <topology evidence="1">Multi-pass membrane protein</topology>
    </subcellularLocation>
</comment>
<comment type="similarity">
    <text evidence="3">Belongs to the amino acid-polyamine-organocation (APC) superfamily.</text>
</comment>
<name>YJEM_SALTI</name>
<gene>
    <name type="primary">yjeM</name>
    <name type="ordered locus">STY4705</name>
    <name type="ordered locus">t4397</name>
</gene>
<proteinExistence type="inferred from homology"/>
<sequence length="500" mass="54460">MTHTIKKMSLIGLILMIFTSVFGFANSPSAFYLMGYSAIPWYIFSALLFFIPFALMMAEMGSAYRKEEGGIYSWMNNSVGPRYAFIGTFMWFSSYVIWMVSTAAKIWVPFSTFVFGADMTQHWRIAGLEPTQVVGLLAVGWMILVTCVAARGINKIARITAVGGIAVMCLNLVLLLVSVAILLLNGGHFAQEINFTSSPNPGYHSGLAMLSFVVFAIFAYGGIEAVGGLVDKTEKPEKNFAKGIVFAAIVISIGYSLAIFLWGVSTNWQQILSNSAVNLGNITYILMSSLGTTLGNALNLSPEAAMTVGVWFARITGLSMFLAYTGAFFTLSYSPLKAIIQGTPKALWPAPMTTLNANGMPATAMWLQCVLVSLFILLVSFGGDTASAFYNKLTLMANVSMTLPYLFLALAFPFFKARQDLERPFVLFKTKASTLVATGVVVLVVTFANVFTIIQPVIEAGDWDSALWMIGGPIFFSLLAMAIYQNYSSRMSADPEWAAE</sequence>
<evidence type="ECO:0000250" key="1"/>
<evidence type="ECO:0000255" key="2"/>
<evidence type="ECO:0000305" key="3"/>
<feature type="chain" id="PRO_0000213047" description="Inner membrane transporter YjeM">
    <location>
        <begin position="1"/>
        <end position="500"/>
    </location>
</feature>
<feature type="topological domain" description="Cytoplasmic" evidence="2">
    <location>
        <begin position="1"/>
        <end position="10"/>
    </location>
</feature>
<feature type="transmembrane region" description="Helical" evidence="2">
    <location>
        <begin position="11"/>
        <end position="31"/>
    </location>
</feature>
<feature type="topological domain" description="Periplasmic" evidence="2">
    <location>
        <begin position="32"/>
        <end position="37"/>
    </location>
</feature>
<feature type="transmembrane region" description="Helical" evidence="2">
    <location>
        <begin position="38"/>
        <end position="58"/>
    </location>
</feature>
<feature type="topological domain" description="Cytoplasmic" evidence="2">
    <location>
        <begin position="59"/>
        <end position="83"/>
    </location>
</feature>
<feature type="transmembrane region" description="Helical" evidence="2">
    <location>
        <begin position="84"/>
        <end position="104"/>
    </location>
</feature>
<feature type="topological domain" description="Periplasmic" evidence="2">
    <location>
        <begin position="105"/>
        <end position="124"/>
    </location>
</feature>
<feature type="transmembrane region" description="Helical" evidence="2">
    <location>
        <begin position="125"/>
        <end position="145"/>
    </location>
</feature>
<feature type="topological domain" description="Cytoplasmic" evidence="2">
    <location>
        <begin position="146"/>
        <end position="163"/>
    </location>
</feature>
<feature type="transmembrane region" description="Helical" evidence="2">
    <location>
        <begin position="164"/>
        <end position="184"/>
    </location>
</feature>
<feature type="topological domain" description="Periplasmic" evidence="2">
    <location>
        <begin position="185"/>
        <end position="209"/>
    </location>
</feature>
<feature type="transmembrane region" description="Helical" evidence="2">
    <location>
        <begin position="210"/>
        <end position="230"/>
    </location>
</feature>
<feature type="topological domain" description="Cytoplasmic" evidence="2">
    <location>
        <begin position="231"/>
        <end position="243"/>
    </location>
</feature>
<feature type="transmembrane region" description="Helical" evidence="2">
    <location>
        <begin position="244"/>
        <end position="264"/>
    </location>
</feature>
<feature type="topological domain" description="Periplasmic" evidence="2">
    <location>
        <begin position="265"/>
        <end position="308"/>
    </location>
</feature>
<feature type="transmembrane region" description="Helical" evidence="2">
    <location>
        <begin position="309"/>
        <end position="329"/>
    </location>
</feature>
<feature type="topological domain" description="Cytoplasmic" evidence="2">
    <location>
        <begin position="330"/>
        <end position="361"/>
    </location>
</feature>
<feature type="transmembrane region" description="Helical" evidence="2">
    <location>
        <begin position="362"/>
        <end position="382"/>
    </location>
</feature>
<feature type="topological domain" description="Periplasmic" evidence="2">
    <location>
        <begin position="383"/>
        <end position="394"/>
    </location>
</feature>
<feature type="transmembrane region" description="Helical" evidence="2">
    <location>
        <begin position="395"/>
        <end position="415"/>
    </location>
</feature>
<feature type="topological domain" description="Cytoplasmic" evidence="2">
    <location>
        <begin position="416"/>
        <end position="433"/>
    </location>
</feature>
<feature type="transmembrane region" description="Helical" evidence="2">
    <location>
        <begin position="434"/>
        <end position="454"/>
    </location>
</feature>
<feature type="topological domain" description="Periplasmic" evidence="2">
    <location>
        <begin position="455"/>
        <end position="462"/>
    </location>
</feature>
<feature type="transmembrane region" description="Helical" evidence="2">
    <location>
        <begin position="463"/>
        <end position="483"/>
    </location>
</feature>
<feature type="topological domain" description="Cytoplasmic" evidence="2">
    <location>
        <begin position="484"/>
        <end position="500"/>
    </location>
</feature>
<dbReference type="EMBL" id="AL513382">
    <property type="protein sequence ID" value="CAD06825.1"/>
    <property type="molecule type" value="Genomic_DNA"/>
</dbReference>
<dbReference type="EMBL" id="AE014613">
    <property type="protein sequence ID" value="AAO71848.1"/>
    <property type="molecule type" value="Genomic_DNA"/>
</dbReference>
<dbReference type="RefSeq" id="NP_458784.1">
    <property type="nucleotide sequence ID" value="NC_003198.1"/>
</dbReference>
<dbReference type="RefSeq" id="WP_000149876.1">
    <property type="nucleotide sequence ID" value="NZ_WSUR01000012.1"/>
</dbReference>
<dbReference type="SMR" id="P0A2N5"/>
<dbReference type="STRING" id="220341.gene:17588523"/>
<dbReference type="KEGG" id="stt:t4397"/>
<dbReference type="KEGG" id="sty:STY4705"/>
<dbReference type="PATRIC" id="fig|220341.7.peg.4806"/>
<dbReference type="eggNOG" id="COG0531">
    <property type="taxonomic scope" value="Bacteria"/>
</dbReference>
<dbReference type="HOGENOM" id="CLU_020854_2_1_6"/>
<dbReference type="OMA" id="FMWFASY"/>
<dbReference type="OrthoDB" id="3185104at2"/>
<dbReference type="Proteomes" id="UP000000541">
    <property type="component" value="Chromosome"/>
</dbReference>
<dbReference type="Proteomes" id="UP000002670">
    <property type="component" value="Chromosome"/>
</dbReference>
<dbReference type="GO" id="GO:0005886">
    <property type="term" value="C:plasma membrane"/>
    <property type="evidence" value="ECO:0007669"/>
    <property type="project" value="UniProtKB-SubCell"/>
</dbReference>
<dbReference type="GO" id="GO:0022857">
    <property type="term" value="F:transmembrane transporter activity"/>
    <property type="evidence" value="ECO:0007669"/>
    <property type="project" value="InterPro"/>
</dbReference>
<dbReference type="Gene3D" id="1.20.1740.10">
    <property type="entry name" value="Amino acid/polyamine transporter I"/>
    <property type="match status" value="1"/>
</dbReference>
<dbReference type="InterPro" id="IPR002293">
    <property type="entry name" value="AA/rel_permease1"/>
</dbReference>
<dbReference type="InterPro" id="IPR050367">
    <property type="entry name" value="APC_superfamily"/>
</dbReference>
<dbReference type="NCBIfam" id="NF011775">
    <property type="entry name" value="PRK15238.1"/>
    <property type="match status" value="1"/>
</dbReference>
<dbReference type="PANTHER" id="PTHR42770">
    <property type="entry name" value="AMINO ACID TRANSPORTER-RELATED"/>
    <property type="match status" value="1"/>
</dbReference>
<dbReference type="PANTHER" id="PTHR42770:SF15">
    <property type="entry name" value="GLUTAMATE_GAMMA-AMINOBUTYRATE ANTIPORTER-RELATED"/>
    <property type="match status" value="1"/>
</dbReference>
<dbReference type="Pfam" id="PF13520">
    <property type="entry name" value="AA_permease_2"/>
    <property type="match status" value="1"/>
</dbReference>
<dbReference type="PIRSF" id="PIRSF006060">
    <property type="entry name" value="AA_transporter"/>
    <property type="match status" value="1"/>
</dbReference>
<organism>
    <name type="scientific">Salmonella typhi</name>
    <dbReference type="NCBI Taxonomy" id="90370"/>
    <lineage>
        <taxon>Bacteria</taxon>
        <taxon>Pseudomonadati</taxon>
        <taxon>Pseudomonadota</taxon>
        <taxon>Gammaproteobacteria</taxon>
        <taxon>Enterobacterales</taxon>
        <taxon>Enterobacteriaceae</taxon>
        <taxon>Salmonella</taxon>
    </lineage>
</organism>